<evidence type="ECO:0000255" key="1">
    <source>
        <dbReference type="HAMAP-Rule" id="MF_01227"/>
    </source>
</evidence>
<organism>
    <name type="scientific">Thermococcus kodakarensis (strain ATCC BAA-918 / JCM 12380 / KOD1)</name>
    <name type="common">Pyrococcus kodakaraensis (strain KOD1)</name>
    <dbReference type="NCBI Taxonomy" id="69014"/>
    <lineage>
        <taxon>Archaea</taxon>
        <taxon>Methanobacteriati</taxon>
        <taxon>Methanobacteriota</taxon>
        <taxon>Thermococci</taxon>
        <taxon>Thermococcales</taxon>
        <taxon>Thermococcaceae</taxon>
        <taxon>Thermococcus</taxon>
    </lineage>
</organism>
<reference key="1">
    <citation type="journal article" date="2005" name="Genome Res.">
        <title>Complete genome sequence of the hyperthermophilic archaeon Thermococcus kodakaraensis KOD1 and comparison with Pyrococcus genomes.</title>
        <authorList>
            <person name="Fukui T."/>
            <person name="Atomi H."/>
            <person name="Kanai T."/>
            <person name="Matsumi R."/>
            <person name="Fujiwara S."/>
            <person name="Imanaka T."/>
        </authorList>
    </citation>
    <scope>NUCLEOTIDE SEQUENCE [LARGE SCALE GENOMIC DNA]</scope>
    <source>
        <strain>ATCC BAA-918 / JCM 12380 / KOD1</strain>
    </source>
</reference>
<accession>Q5JGF1</accession>
<name>PYRG_THEKO</name>
<keyword id="KW-0067">ATP-binding</keyword>
<keyword id="KW-0315">Glutamine amidotransferase</keyword>
<keyword id="KW-0436">Ligase</keyword>
<keyword id="KW-0460">Magnesium</keyword>
<keyword id="KW-0479">Metal-binding</keyword>
<keyword id="KW-0547">Nucleotide-binding</keyword>
<keyword id="KW-0665">Pyrimidine biosynthesis</keyword>
<keyword id="KW-1185">Reference proteome</keyword>
<gene>
    <name evidence="1" type="primary">pyrG</name>
    <name type="ordered locus">TK1193</name>
</gene>
<comment type="function">
    <text evidence="1">Catalyzes the ATP-dependent amination of UTP to CTP with either L-glutamine or ammonia as the source of nitrogen. Regulates intracellular CTP levels through interactions with the four ribonucleotide triphosphates.</text>
</comment>
<comment type="catalytic activity">
    <reaction evidence="1">
        <text>UTP + L-glutamine + ATP + H2O = CTP + L-glutamate + ADP + phosphate + 2 H(+)</text>
        <dbReference type="Rhea" id="RHEA:26426"/>
        <dbReference type="ChEBI" id="CHEBI:15377"/>
        <dbReference type="ChEBI" id="CHEBI:15378"/>
        <dbReference type="ChEBI" id="CHEBI:29985"/>
        <dbReference type="ChEBI" id="CHEBI:30616"/>
        <dbReference type="ChEBI" id="CHEBI:37563"/>
        <dbReference type="ChEBI" id="CHEBI:43474"/>
        <dbReference type="ChEBI" id="CHEBI:46398"/>
        <dbReference type="ChEBI" id="CHEBI:58359"/>
        <dbReference type="ChEBI" id="CHEBI:456216"/>
        <dbReference type="EC" id="6.3.4.2"/>
    </reaction>
</comment>
<comment type="catalytic activity">
    <reaction evidence="1">
        <text>L-glutamine + H2O = L-glutamate + NH4(+)</text>
        <dbReference type="Rhea" id="RHEA:15889"/>
        <dbReference type="ChEBI" id="CHEBI:15377"/>
        <dbReference type="ChEBI" id="CHEBI:28938"/>
        <dbReference type="ChEBI" id="CHEBI:29985"/>
        <dbReference type="ChEBI" id="CHEBI:58359"/>
    </reaction>
</comment>
<comment type="catalytic activity">
    <reaction evidence="1">
        <text>UTP + NH4(+) + ATP = CTP + ADP + phosphate + 2 H(+)</text>
        <dbReference type="Rhea" id="RHEA:16597"/>
        <dbReference type="ChEBI" id="CHEBI:15378"/>
        <dbReference type="ChEBI" id="CHEBI:28938"/>
        <dbReference type="ChEBI" id="CHEBI:30616"/>
        <dbReference type="ChEBI" id="CHEBI:37563"/>
        <dbReference type="ChEBI" id="CHEBI:43474"/>
        <dbReference type="ChEBI" id="CHEBI:46398"/>
        <dbReference type="ChEBI" id="CHEBI:456216"/>
    </reaction>
</comment>
<comment type="activity regulation">
    <text evidence="1">Allosterically activated by GTP, when glutamine is the substrate; GTP has no effect on the reaction when ammonia is the substrate. The allosteric effector GTP functions by stabilizing the protein conformation that binds the tetrahedral intermediate(s) formed during glutamine hydrolysis. Inhibited by the product CTP, via allosteric rather than competitive inhibition.</text>
</comment>
<comment type="pathway">
    <text evidence="1">Pyrimidine metabolism; CTP biosynthesis via de novo pathway; CTP from UDP: step 2/2.</text>
</comment>
<comment type="subunit">
    <text evidence="1">Homotetramer.</text>
</comment>
<comment type="miscellaneous">
    <text evidence="1">CTPSs have evolved a hybrid strategy for distinguishing between UTP and CTP. The overlapping regions of the product feedback inhibitory and substrate sites recognize a common feature in both compounds, the triphosphate moiety. To differentiate isosteric substrate and product pyrimidine rings, an additional pocket far from the expected kinase/ligase catalytic site, specifically recognizes the cytosine and ribose portions of the product inhibitor.</text>
</comment>
<comment type="similarity">
    <text evidence="1">Belongs to the CTP synthase family.</text>
</comment>
<feature type="chain" id="PRO_0000138268" description="CTP synthase">
    <location>
        <begin position="1"/>
        <end position="533"/>
    </location>
</feature>
<feature type="domain" description="Glutamine amidotransferase type-1" evidence="1">
    <location>
        <begin position="290"/>
        <end position="532"/>
    </location>
</feature>
<feature type="region of interest" description="Amidoligase domain" evidence="1">
    <location>
        <begin position="1"/>
        <end position="265"/>
    </location>
</feature>
<feature type="active site" description="Nucleophile; for glutamine hydrolysis" evidence="1">
    <location>
        <position position="378"/>
    </location>
</feature>
<feature type="active site" evidence="1">
    <location>
        <position position="505"/>
    </location>
</feature>
<feature type="active site" evidence="1">
    <location>
        <position position="507"/>
    </location>
</feature>
<feature type="binding site" evidence="1">
    <location>
        <position position="13"/>
    </location>
    <ligand>
        <name>CTP</name>
        <dbReference type="ChEBI" id="CHEBI:37563"/>
        <note>allosteric inhibitor</note>
    </ligand>
</feature>
<feature type="binding site" evidence="1">
    <location>
        <position position="13"/>
    </location>
    <ligand>
        <name>UTP</name>
        <dbReference type="ChEBI" id="CHEBI:46398"/>
    </ligand>
</feature>
<feature type="binding site" evidence="1">
    <location>
        <begin position="14"/>
        <end position="19"/>
    </location>
    <ligand>
        <name>ATP</name>
        <dbReference type="ChEBI" id="CHEBI:30616"/>
    </ligand>
</feature>
<feature type="binding site" evidence="1">
    <location>
        <position position="54"/>
    </location>
    <ligand>
        <name>L-glutamine</name>
        <dbReference type="ChEBI" id="CHEBI:58359"/>
    </ligand>
</feature>
<feature type="binding site" evidence="1">
    <location>
        <position position="71"/>
    </location>
    <ligand>
        <name>ATP</name>
        <dbReference type="ChEBI" id="CHEBI:30616"/>
    </ligand>
</feature>
<feature type="binding site" evidence="1">
    <location>
        <position position="71"/>
    </location>
    <ligand>
        <name>Mg(2+)</name>
        <dbReference type="ChEBI" id="CHEBI:18420"/>
    </ligand>
</feature>
<feature type="binding site" evidence="1">
    <location>
        <position position="139"/>
    </location>
    <ligand>
        <name>Mg(2+)</name>
        <dbReference type="ChEBI" id="CHEBI:18420"/>
    </ligand>
</feature>
<feature type="binding site" evidence="1">
    <location>
        <begin position="146"/>
        <end position="148"/>
    </location>
    <ligand>
        <name>CTP</name>
        <dbReference type="ChEBI" id="CHEBI:37563"/>
        <note>allosteric inhibitor</note>
    </ligand>
</feature>
<feature type="binding site" evidence="1">
    <location>
        <begin position="186"/>
        <end position="191"/>
    </location>
    <ligand>
        <name>CTP</name>
        <dbReference type="ChEBI" id="CHEBI:37563"/>
        <note>allosteric inhibitor</note>
    </ligand>
</feature>
<feature type="binding site" evidence="1">
    <location>
        <begin position="186"/>
        <end position="191"/>
    </location>
    <ligand>
        <name>UTP</name>
        <dbReference type="ChEBI" id="CHEBI:46398"/>
    </ligand>
</feature>
<feature type="binding site" evidence="1">
    <location>
        <position position="222"/>
    </location>
    <ligand>
        <name>CTP</name>
        <dbReference type="ChEBI" id="CHEBI:37563"/>
        <note>allosteric inhibitor</note>
    </ligand>
</feature>
<feature type="binding site" evidence="1">
    <location>
        <position position="222"/>
    </location>
    <ligand>
        <name>UTP</name>
        <dbReference type="ChEBI" id="CHEBI:46398"/>
    </ligand>
</feature>
<feature type="binding site" evidence="1">
    <location>
        <position position="351"/>
    </location>
    <ligand>
        <name>L-glutamine</name>
        <dbReference type="ChEBI" id="CHEBI:58359"/>
    </ligand>
</feature>
<feature type="binding site" evidence="1">
    <location>
        <begin position="379"/>
        <end position="382"/>
    </location>
    <ligand>
        <name>L-glutamine</name>
        <dbReference type="ChEBI" id="CHEBI:58359"/>
    </ligand>
</feature>
<feature type="binding site" evidence="1">
    <location>
        <position position="402"/>
    </location>
    <ligand>
        <name>L-glutamine</name>
        <dbReference type="ChEBI" id="CHEBI:58359"/>
    </ligand>
</feature>
<feature type="binding site" evidence="1">
    <location>
        <position position="459"/>
    </location>
    <ligand>
        <name>L-glutamine</name>
        <dbReference type="ChEBI" id="CHEBI:58359"/>
    </ligand>
</feature>
<protein>
    <recommendedName>
        <fullName evidence="1">CTP synthase</fullName>
        <ecNumber evidence="1">6.3.4.2</ecNumber>
    </recommendedName>
    <alternativeName>
        <fullName evidence="1">Cytidine 5'-triphosphate synthase</fullName>
    </alternativeName>
    <alternativeName>
        <fullName evidence="1">Cytidine triphosphate synthetase</fullName>
        <shortName evidence="1">CTP synthetase</shortName>
        <shortName evidence="1">CTPS</shortName>
    </alternativeName>
    <alternativeName>
        <fullName evidence="1">UTP--ammonia ligase</fullName>
    </alternativeName>
</protein>
<dbReference type="EC" id="6.3.4.2" evidence="1"/>
<dbReference type="EMBL" id="AP006878">
    <property type="protein sequence ID" value="BAD85382.1"/>
    <property type="molecule type" value="Genomic_DNA"/>
</dbReference>
<dbReference type="RefSeq" id="WP_011250144.1">
    <property type="nucleotide sequence ID" value="NC_006624.1"/>
</dbReference>
<dbReference type="SMR" id="Q5JGF1"/>
<dbReference type="FunCoup" id="Q5JGF1">
    <property type="interactions" value="172"/>
</dbReference>
<dbReference type="IntAct" id="Q5JGF1">
    <property type="interactions" value="1"/>
</dbReference>
<dbReference type="MINT" id="Q5JGF1"/>
<dbReference type="STRING" id="69014.TK1193"/>
<dbReference type="EnsemblBacteria" id="BAD85382">
    <property type="protein sequence ID" value="BAD85382"/>
    <property type="gene ID" value="TK1193"/>
</dbReference>
<dbReference type="GeneID" id="78447709"/>
<dbReference type="KEGG" id="tko:TK1193"/>
<dbReference type="PATRIC" id="fig|69014.16.peg.1168"/>
<dbReference type="eggNOG" id="arCOG00063">
    <property type="taxonomic scope" value="Archaea"/>
</dbReference>
<dbReference type="HOGENOM" id="CLU_011675_5_0_2"/>
<dbReference type="InParanoid" id="Q5JGF1"/>
<dbReference type="OrthoDB" id="52769at2157"/>
<dbReference type="PhylomeDB" id="Q5JGF1"/>
<dbReference type="UniPathway" id="UPA00159">
    <property type="reaction ID" value="UER00277"/>
</dbReference>
<dbReference type="Proteomes" id="UP000000536">
    <property type="component" value="Chromosome"/>
</dbReference>
<dbReference type="GO" id="GO:0005524">
    <property type="term" value="F:ATP binding"/>
    <property type="evidence" value="ECO:0007669"/>
    <property type="project" value="UniProtKB-KW"/>
</dbReference>
<dbReference type="GO" id="GO:0003883">
    <property type="term" value="F:CTP synthase activity"/>
    <property type="evidence" value="ECO:0000318"/>
    <property type="project" value="GO_Central"/>
</dbReference>
<dbReference type="GO" id="GO:0004359">
    <property type="term" value="F:glutaminase activity"/>
    <property type="evidence" value="ECO:0007669"/>
    <property type="project" value="RHEA"/>
</dbReference>
<dbReference type="GO" id="GO:0042802">
    <property type="term" value="F:identical protein binding"/>
    <property type="evidence" value="ECO:0000318"/>
    <property type="project" value="GO_Central"/>
</dbReference>
<dbReference type="GO" id="GO:0046872">
    <property type="term" value="F:metal ion binding"/>
    <property type="evidence" value="ECO:0007669"/>
    <property type="project" value="UniProtKB-KW"/>
</dbReference>
<dbReference type="GO" id="GO:0044210">
    <property type="term" value="P:'de novo' CTP biosynthetic process"/>
    <property type="evidence" value="ECO:0007669"/>
    <property type="project" value="UniProtKB-UniRule"/>
</dbReference>
<dbReference type="GO" id="GO:0006241">
    <property type="term" value="P:CTP biosynthetic process"/>
    <property type="evidence" value="ECO:0000318"/>
    <property type="project" value="GO_Central"/>
</dbReference>
<dbReference type="GO" id="GO:0019856">
    <property type="term" value="P:pyrimidine nucleobase biosynthetic process"/>
    <property type="evidence" value="ECO:0000318"/>
    <property type="project" value="GO_Central"/>
</dbReference>
<dbReference type="CDD" id="cd03113">
    <property type="entry name" value="CTPS_N"/>
    <property type="match status" value="1"/>
</dbReference>
<dbReference type="CDD" id="cd01746">
    <property type="entry name" value="GATase1_CTP_Synthase"/>
    <property type="match status" value="1"/>
</dbReference>
<dbReference type="FunFam" id="3.40.50.300:FF:000009">
    <property type="entry name" value="CTP synthase"/>
    <property type="match status" value="1"/>
</dbReference>
<dbReference type="FunFam" id="3.40.50.880:FF:000002">
    <property type="entry name" value="CTP synthase"/>
    <property type="match status" value="1"/>
</dbReference>
<dbReference type="Gene3D" id="3.40.50.880">
    <property type="match status" value="1"/>
</dbReference>
<dbReference type="Gene3D" id="3.40.50.300">
    <property type="entry name" value="P-loop containing nucleotide triphosphate hydrolases"/>
    <property type="match status" value="1"/>
</dbReference>
<dbReference type="HAMAP" id="MF_01227">
    <property type="entry name" value="PyrG"/>
    <property type="match status" value="1"/>
</dbReference>
<dbReference type="InterPro" id="IPR029062">
    <property type="entry name" value="Class_I_gatase-like"/>
</dbReference>
<dbReference type="InterPro" id="IPR004468">
    <property type="entry name" value="CTP_synthase"/>
</dbReference>
<dbReference type="InterPro" id="IPR017456">
    <property type="entry name" value="CTP_synthase_N"/>
</dbReference>
<dbReference type="InterPro" id="IPR017926">
    <property type="entry name" value="GATASE"/>
</dbReference>
<dbReference type="InterPro" id="IPR033828">
    <property type="entry name" value="GATase1_CTP_Synthase"/>
</dbReference>
<dbReference type="InterPro" id="IPR027417">
    <property type="entry name" value="P-loop_NTPase"/>
</dbReference>
<dbReference type="NCBIfam" id="NF003792">
    <property type="entry name" value="PRK05380.1"/>
    <property type="match status" value="1"/>
</dbReference>
<dbReference type="NCBIfam" id="TIGR00337">
    <property type="entry name" value="PyrG"/>
    <property type="match status" value="1"/>
</dbReference>
<dbReference type="PANTHER" id="PTHR11550">
    <property type="entry name" value="CTP SYNTHASE"/>
    <property type="match status" value="1"/>
</dbReference>
<dbReference type="PANTHER" id="PTHR11550:SF0">
    <property type="entry name" value="CTP SYNTHASE-RELATED"/>
    <property type="match status" value="1"/>
</dbReference>
<dbReference type="Pfam" id="PF06418">
    <property type="entry name" value="CTP_synth_N"/>
    <property type="match status" value="1"/>
</dbReference>
<dbReference type="Pfam" id="PF00117">
    <property type="entry name" value="GATase"/>
    <property type="match status" value="1"/>
</dbReference>
<dbReference type="SUPFAM" id="SSF52317">
    <property type="entry name" value="Class I glutamine amidotransferase-like"/>
    <property type="match status" value="1"/>
</dbReference>
<dbReference type="SUPFAM" id="SSF52540">
    <property type="entry name" value="P-loop containing nucleoside triphosphate hydrolases"/>
    <property type="match status" value="1"/>
</dbReference>
<dbReference type="PROSITE" id="PS51273">
    <property type="entry name" value="GATASE_TYPE_1"/>
    <property type="match status" value="1"/>
</dbReference>
<proteinExistence type="inferred from homology"/>
<sequence length="533" mass="60027">MTKFIFVTGGVVSGLGKGITSASIGMLFKARGFRTTNIKIDPYLNYDAGTMNPYQHGEVFVLDDGGEVDLDLGNYERFLDTSLSFDHNITTGKVYSAVIEKERKGEYLGATVQVIPHITNEIKERIRRIARDYDVVVVEIGGTVGDIESMPFLEAARQMQIEEGRENVAFVHVTYVPRLRVVGEQKTKPTQHSVKELRSLGIQPDAIVARSEDPLEDSARRKISLFTNVPEEAVISAYDVEDTYEVPLMLEKEGLPAYLARRLGLPEREPDLEAWREMVEKYKSLTDTVEIAIVGKYVKLADSYLSIKEALKHSSVANDVKVKIRWIEAEDVERQGVKLLEGVDGIIVPGGFGARGTEGKMMAIRYARENNIPFLGICFGFQLTVVEFARNVLGLEGAHSTEIDPQTPYPVVDLMPEQRDLDRLGGTMRLGAYPVHIKPNTLARRLYGREIVYERHRHRWEVNPDYVEKFEEAGLVFSGIAGDDERRMEILELPGHSYFIATQFHPEFKSRPMRPAPVFRGLVEAAKKKKYGS</sequence>